<feature type="chain" id="PRO_0000051570" description="Histone acetyltransferase KAT7">
    <location>
        <begin position="1"/>
        <end position="613"/>
    </location>
</feature>
<feature type="domain" description="MYST-type HAT" evidence="3">
    <location>
        <begin position="334"/>
        <end position="609"/>
    </location>
</feature>
<feature type="zinc finger region" description="CCHHC-type" evidence="4">
    <location>
        <begin position="178"/>
        <end position="221"/>
    </location>
</feature>
<feature type="zinc finger region" description="C2HC MYST-type" evidence="3">
    <location>
        <begin position="367"/>
        <end position="392"/>
    </location>
</feature>
<feature type="region of interest" description="Disordered" evidence="5">
    <location>
        <begin position="1"/>
        <end position="175"/>
    </location>
</feature>
<feature type="compositionally biased region" description="Low complexity" evidence="5">
    <location>
        <begin position="44"/>
        <end position="59"/>
    </location>
</feature>
<feature type="compositionally biased region" description="Polar residues" evidence="5">
    <location>
        <begin position="98"/>
        <end position="107"/>
    </location>
</feature>
<feature type="compositionally biased region" description="Basic and acidic residues" evidence="5">
    <location>
        <begin position="112"/>
        <end position="127"/>
    </location>
</feature>
<feature type="compositionally biased region" description="Low complexity" evidence="5">
    <location>
        <begin position="136"/>
        <end position="147"/>
    </location>
</feature>
<feature type="compositionally biased region" description="Basic and acidic residues" evidence="5">
    <location>
        <begin position="150"/>
        <end position="170"/>
    </location>
</feature>
<feature type="active site" description="Proton donor/acceptor" evidence="2">
    <location>
        <position position="510"/>
    </location>
</feature>
<feature type="binding site" evidence="1">
    <location>
        <position position="370"/>
    </location>
    <ligand>
        <name>Zn(2+)</name>
        <dbReference type="ChEBI" id="CHEBI:29105"/>
    </ligand>
</feature>
<feature type="binding site" evidence="1">
    <location>
        <position position="373"/>
    </location>
    <ligand>
        <name>Zn(2+)</name>
        <dbReference type="ChEBI" id="CHEBI:29105"/>
    </ligand>
</feature>
<feature type="binding site" evidence="1">
    <location>
        <position position="386"/>
    </location>
    <ligand>
        <name>Zn(2+)</name>
        <dbReference type="ChEBI" id="CHEBI:29105"/>
    </ligand>
</feature>
<feature type="binding site" evidence="1">
    <location>
        <position position="390"/>
    </location>
    <ligand>
        <name>Zn(2+)</name>
        <dbReference type="ChEBI" id="CHEBI:29105"/>
    </ligand>
</feature>
<feature type="binding site" evidence="1">
    <location>
        <begin position="477"/>
        <end position="479"/>
    </location>
    <ligand>
        <name>acetyl-CoA</name>
        <dbReference type="ChEBI" id="CHEBI:57288"/>
    </ligand>
</feature>
<feature type="binding site" evidence="1">
    <location>
        <begin position="485"/>
        <end position="490"/>
    </location>
    <ligand>
        <name>acetyl-CoA</name>
        <dbReference type="ChEBI" id="CHEBI:57288"/>
    </ligand>
</feature>
<feature type="binding site" evidence="1">
    <location>
        <position position="514"/>
    </location>
    <ligand>
        <name>acetyl-CoA</name>
        <dbReference type="ChEBI" id="CHEBI:57288"/>
    </ligand>
</feature>
<feature type="binding site" evidence="1">
    <location>
        <position position="523"/>
    </location>
    <ligand>
        <name>acetyl-CoA</name>
        <dbReference type="ChEBI" id="CHEBI:57288"/>
    </ligand>
</feature>
<feature type="modified residue" description="Phosphoserine" evidence="1">
    <location>
        <position position="12"/>
    </location>
</feature>
<feature type="modified residue" description="Phosphoserine" evidence="16">
    <location>
        <position position="52"/>
    </location>
</feature>
<feature type="modified residue" description="Phosphoserine" evidence="1">
    <location>
        <position position="55"/>
    </location>
</feature>
<feature type="modified residue" description="Phosphoserine" evidence="16">
    <location>
        <position position="59"/>
    </location>
</feature>
<feature type="modified residue" description="Phosphoserine" evidence="1">
    <location>
        <position position="66"/>
    </location>
</feature>
<feature type="modified residue" description="Phosphothreonine" evidence="16">
    <location>
        <position position="87"/>
    </location>
</feature>
<feature type="modified residue" description="Phosphothreonine" evidence="16">
    <location>
        <position position="90"/>
    </location>
</feature>
<feature type="modified residue" description="Phosphoserine" evidence="16">
    <location>
        <position position="104"/>
    </location>
</feature>
<feature type="modified residue" description="Phosphothreonine" evidence="16">
    <location>
        <position position="106"/>
    </location>
</feature>
<feature type="modified residue" description="Phosphoserine" evidence="1">
    <location>
        <position position="113"/>
    </location>
</feature>
<feature type="modified residue" description="Phosphoserine" evidence="16">
    <location>
        <position position="126"/>
    </location>
</feature>
<feature type="modified residue" description="Phosphothreonine" evidence="16">
    <location>
        <position position="130"/>
    </location>
</feature>
<feature type="modified residue" description="Phosphoserine" evidence="1">
    <location>
        <position position="160"/>
    </location>
</feature>
<feature type="modified residue" description="Phosphoserine" evidence="1">
    <location>
        <position position="164"/>
    </location>
</feature>
<feature type="modified residue" description="Phosphoserine" evidence="1">
    <location>
        <position position="166"/>
    </location>
</feature>
<feature type="modified residue" description="Phosphoserine" evidence="1">
    <location>
        <position position="180"/>
    </location>
</feature>
<feature type="modified residue" description="N6-acetyllysine" evidence="17">
    <location>
        <position position="201"/>
    </location>
</feature>
<feature type="modified residue" description="N6-acetyllysine" evidence="17">
    <location>
        <position position="279"/>
    </location>
</feature>
<feature type="modified residue" description="N6-acetyllysine; by autocatalysis" evidence="2">
    <location>
        <position position="434"/>
    </location>
</feature>
<feature type="modified residue" description="Phosphoserine" evidence="1">
    <location>
        <position position="508"/>
    </location>
</feature>
<feature type="cross-link" description="Glycyl lysine isopeptide (Lys-Gly) (interchain with G-Cter in SUMO2)" evidence="1">
    <location>
        <position position="325"/>
    </location>
</feature>
<feature type="cross-link" description="Glycyl lysine isopeptide (Lys-Gly) (interchain with G-Cter in ubiquitin)" evidence="1">
    <location>
        <position position="340"/>
    </location>
</feature>
<feature type="splice variant" id="VSP_014582" description="In isoform 3, isoform 4 and isoform 5." evidence="11">
    <original>MAIGVV</original>
    <variation>MPRR</variation>
    <location>
        <begin position="1"/>
        <end position="6"/>
    </location>
</feature>
<feature type="splice variant" id="VSP_014583" description="In isoform 5." evidence="11">
    <location>
        <begin position="57"/>
        <end position="115"/>
    </location>
</feature>
<feature type="splice variant" id="VSP_014584" description="In isoform 2, isoform 4 and isoform 5." evidence="11">
    <location>
        <begin position="224"/>
        <end position="253"/>
    </location>
</feature>
<feature type="sequence conflict" description="In Ref. 2; AAH57102." evidence="13" ref="2">
    <original>L</original>
    <variation>P</variation>
    <location>
        <position position="429"/>
    </location>
</feature>
<feature type="sequence conflict" description="In Ref. 1; CAI24805." evidence="13" ref="1">
    <original>EISQ</original>
    <variation>GPDR</variation>
    <location>
        <begin position="545"/>
        <end position="548"/>
    </location>
</feature>
<reference key="1">
    <citation type="journal article" date="2009" name="PLoS Biol.">
        <title>Lineage-specific biology revealed by a finished genome assembly of the mouse.</title>
        <authorList>
            <person name="Church D.M."/>
            <person name="Goodstadt L."/>
            <person name="Hillier L.W."/>
            <person name="Zody M.C."/>
            <person name="Goldstein S."/>
            <person name="She X."/>
            <person name="Bult C.J."/>
            <person name="Agarwala R."/>
            <person name="Cherry J.L."/>
            <person name="DiCuccio M."/>
            <person name="Hlavina W."/>
            <person name="Kapustin Y."/>
            <person name="Meric P."/>
            <person name="Maglott D."/>
            <person name="Birtle Z."/>
            <person name="Marques A.C."/>
            <person name="Graves T."/>
            <person name="Zhou S."/>
            <person name="Teague B."/>
            <person name="Potamousis K."/>
            <person name="Churas C."/>
            <person name="Place M."/>
            <person name="Herschleb J."/>
            <person name="Runnheim R."/>
            <person name="Forrest D."/>
            <person name="Amos-Landgraf J."/>
            <person name="Schwartz D.C."/>
            <person name="Cheng Z."/>
            <person name="Lindblad-Toh K."/>
            <person name="Eichler E.E."/>
            <person name="Ponting C.P."/>
        </authorList>
    </citation>
    <scope>NUCLEOTIDE SEQUENCE [LARGE SCALE GENOMIC DNA] (ISOFORMS 2 AND 3)</scope>
    <source>
        <strain>C57BL/6J</strain>
    </source>
</reference>
<reference key="2">
    <citation type="journal article" date="2004" name="Genome Res.">
        <title>The status, quality, and expansion of the NIH full-length cDNA project: the Mammalian Gene Collection (MGC).</title>
        <authorList>
            <consortium name="The MGC Project Team"/>
        </authorList>
    </citation>
    <scope>NUCLEOTIDE SEQUENCE [LARGE SCALE MRNA] (ISOFORMS 4 AND 5)</scope>
    <source>
        <strain>C57BL/6J</strain>
        <tissue>Brain</tissue>
        <tissue>Eye</tissue>
    </source>
</reference>
<reference key="3">
    <citation type="journal article" date="2010" name="Cell">
        <title>A tissue-specific atlas of mouse protein phosphorylation and expression.</title>
        <authorList>
            <person name="Huttlin E.L."/>
            <person name="Jedrychowski M.P."/>
            <person name="Elias J.E."/>
            <person name="Goswami T."/>
            <person name="Rad R."/>
            <person name="Beausoleil S.A."/>
            <person name="Villen J."/>
            <person name="Haas W."/>
            <person name="Sowa M.E."/>
            <person name="Gygi S.P."/>
        </authorList>
    </citation>
    <scope>PHOSPHORYLATION [LARGE SCALE ANALYSIS] AT SER-52; SER-59; THR-87; THR-90; SER-104; THR-106; SER-126 AND THR-130</scope>
    <scope>IDENTIFICATION BY MASS SPECTROMETRY [LARGE SCALE ANALYSIS]</scope>
    <source>
        <tissue>Brain</tissue>
        <tissue>Brown adipose tissue</tissue>
        <tissue>Heart</tissue>
        <tissue>Kidney</tissue>
        <tissue>Liver</tissue>
        <tissue>Lung</tissue>
        <tissue>Pancreas</tissue>
        <tissue>Spleen</tissue>
        <tissue>Testis</tissue>
    </source>
</reference>
<reference key="4">
    <citation type="journal article" date="2011" name="Blood">
        <title>The Hbo1-Brd1/Brpf2 complex is responsible for global acetylation of H3K14 and required for fetal liver erythropoiesis.</title>
        <authorList>
            <person name="Mishima Y."/>
            <person name="Miyagi S."/>
            <person name="Saraya A."/>
            <person name="Negishi M."/>
            <person name="Endoh M."/>
            <person name="Endo T.A."/>
            <person name="Toyoda T."/>
            <person name="Shinga J."/>
            <person name="Katsumoto T."/>
            <person name="Chiba T."/>
            <person name="Yamaguchi N."/>
            <person name="Kitabayashi I."/>
            <person name="Koseki H."/>
            <person name="Iwama A."/>
        </authorList>
    </citation>
    <scope>FUNCTION</scope>
    <scope>IDENTIFICATION IN THE HBO1 COMPLEX</scope>
</reference>
<reference key="5">
    <citation type="journal article" date="2011" name="Mol. Cell. Biol.">
        <title>HBO1 is required for H3K14 acetylation and normal transcriptional activity during embryonic development.</title>
        <authorList>
            <person name="Kueh A.J."/>
            <person name="Dixon M.P."/>
            <person name="Voss A.K."/>
            <person name="Thomas T."/>
        </authorList>
    </citation>
    <scope>FUNCTION</scope>
    <scope>CATALYTIC ACTIVITY</scope>
    <scope>SUBCELLULAR LOCATION</scope>
    <scope>TISSUE SPECIFICITY</scope>
    <scope>DEVELOPMENTAL STAGE</scope>
    <scope>DISRUPTION PHENOTYPE</scope>
</reference>
<reference key="6">
    <citation type="journal article" date="2013" name="J. Biol. Chem.">
        <title>SCF(Fbxw15) mediates histone acetyltransferase binding to origin recognition complex (HBO1) ubiquitin-proteasomal degradation to regulate cell proliferation.</title>
        <authorList>
            <person name="Zou C."/>
            <person name="Chen Y."/>
            <person name="Smith R.M."/>
            <person name="Snavely C."/>
            <person name="Li J."/>
            <person name="Coon T.A."/>
            <person name="Chen B.B."/>
            <person name="Zhao Y."/>
            <person name="Mallampalli R.K."/>
        </authorList>
    </citation>
    <scope>FUNCTION</scope>
    <scope>INTERACTION WITH FBXW15; MAP2K1 AND CUL1</scope>
    <scope>SUBCELLULAR LOCATION</scope>
    <scope>PHOSPHORYLATION</scope>
</reference>
<reference key="7">
    <citation type="journal article" date="2013" name="Mol. Cell">
        <title>SIRT5-mediated lysine desuccinylation impacts diverse metabolic pathways.</title>
        <authorList>
            <person name="Park J."/>
            <person name="Chen Y."/>
            <person name="Tishkoff D.X."/>
            <person name="Peng C."/>
            <person name="Tan M."/>
            <person name="Dai L."/>
            <person name="Xie Z."/>
            <person name="Zhang Y."/>
            <person name="Zwaans B.M."/>
            <person name="Skinner M.E."/>
            <person name="Lombard D.B."/>
            <person name="Zhao Y."/>
        </authorList>
    </citation>
    <scope>ACETYLATION [LARGE SCALE ANALYSIS] AT LYS-201 AND LYS-279</scope>
    <scope>IDENTIFICATION BY MASS SPECTROMETRY [LARGE SCALE ANALYSIS]</scope>
    <source>
        <tissue>Embryonic fibroblast</tissue>
    </source>
</reference>
<reference key="8">
    <citation type="journal article" date="2017" name="J. Leukoc. Biol.">
        <title>Essential role for the histone acetyltransferase KAT7 in T cell development, fitness, and survival.</title>
        <authorList>
            <person name="Newman D.M."/>
            <person name="Voss A.K."/>
            <person name="Thomas T."/>
            <person name="Allan R.S."/>
        </authorList>
    </citation>
    <scope>FUNCTION</scope>
</reference>
<reference key="9">
    <citation type="journal article" date="2020" name="Nature">
        <title>HBO1 is required for the maintenance of leukaemia stem cells.</title>
        <authorList>
            <person name="MacPherson L."/>
            <person name="Anokye J."/>
            <person name="Yeung M.M."/>
            <person name="Lam E.Y.N."/>
            <person name="Chan Y.C."/>
            <person name="Weng C.F."/>
            <person name="Yeh P."/>
            <person name="Knezevic K."/>
            <person name="Butler M.S."/>
            <person name="Hoegl A."/>
            <person name="Chan K.L."/>
            <person name="Burr M.L."/>
            <person name="Gearing L.J."/>
            <person name="Willson T."/>
            <person name="Liu J."/>
            <person name="Choi J."/>
            <person name="Yang Y."/>
            <person name="Bilardi R.A."/>
            <person name="Falk H."/>
            <person name="Nguyen N."/>
            <person name="Stupple P.A."/>
            <person name="Peat T.S."/>
            <person name="Zhang M."/>
            <person name="de Silva M."/>
            <person name="Carrasco-Pozo C."/>
            <person name="Avery V.M."/>
            <person name="Khoo P.S."/>
            <person name="Dolezal O."/>
            <person name="Dennis M.L."/>
            <person name="Nuttall S."/>
            <person name="Surjadi R."/>
            <person name="Newman J."/>
            <person name="Ren B."/>
            <person name="Leaver D.J."/>
            <person name="Sun Y."/>
            <person name="Baell J.B."/>
            <person name="Dovey O."/>
            <person name="Vassiliou G.S."/>
            <person name="Grebien F."/>
            <person name="Dawson S.J."/>
            <person name="Street I.P."/>
            <person name="Monahan B.J."/>
            <person name="Burns C.J."/>
            <person name="Choudhary C."/>
            <person name="Blewitt M.E."/>
            <person name="Voss A.K."/>
            <person name="Thomas T."/>
            <person name="Dawson M.A."/>
        </authorList>
    </citation>
    <scope>FUNCTION</scope>
    <scope>CATALYTIC ACTIVITY</scope>
    <scope>IDENTIFICATION IN THE HBO1 COMPLEX</scope>
</reference>
<keyword id="KW-0007">Acetylation</keyword>
<keyword id="KW-0012">Acyltransferase</keyword>
<keyword id="KW-0025">Alternative splicing</keyword>
<keyword id="KW-0137">Centromere</keyword>
<keyword id="KW-0156">Chromatin regulator</keyword>
<keyword id="KW-0158">Chromosome</keyword>
<keyword id="KW-0963">Cytoplasm</keyword>
<keyword id="KW-0227">DNA damage</keyword>
<keyword id="KW-0234">DNA repair</keyword>
<keyword id="KW-0235">DNA replication</keyword>
<keyword id="KW-1017">Isopeptide bond</keyword>
<keyword id="KW-0479">Metal-binding</keyword>
<keyword id="KW-0539">Nucleus</keyword>
<keyword id="KW-0597">Phosphoprotein</keyword>
<keyword id="KW-1185">Reference proteome</keyword>
<keyword id="KW-0804">Transcription</keyword>
<keyword id="KW-0805">Transcription regulation</keyword>
<keyword id="KW-0808">Transferase</keyword>
<keyword id="KW-0832">Ubl conjugation</keyword>
<keyword id="KW-0862">Zinc</keyword>
<keyword id="KW-0863">Zinc-finger</keyword>
<name>KAT7_MOUSE</name>
<gene>
    <name evidence="15" type="primary">Kat7</name>
    <name evidence="12" type="synonym">Hbo1</name>
    <name type="synonym">Myst2</name>
</gene>
<proteinExistence type="evidence at protein level"/>
<sequence>MAIGVVKRNAGSSSDGTEDSDFSTDLEHTDSSESDGTSRRSARVTRSSARLSQSSQDSSPVRNLPSFGTEEPAYSTRRVTRSQQQPTPVTPKKYPLRQTRSSGSETEQVVDFSDRETKNTADHDESPPRTPTGNAPSSESDIDISSPNVSHDESIAKDMSLKDSGSDLSHRPKRRRFHESYNFNMKCPTPGCNSLGHLTGKHERHFSISGCPLYHNLSADECKVRAQSRDKQIEERMLSHRQDDNNRHATRHQAPTERQLRYKEKVAELRKKRNSGLSKEQKEKYMEHRQTYGNTREPLLENLTSEYDLDLFRRAQARASEDLEKLRLQGQITEGSNMIKTIAFGRYELDTWYHSPYPEEYARLGRLYMCEFCLKYMKSQTILRRHMAKCVWKHPPGDEIYRKGSISVFEVDGKKNKIYCQNLCLLAKLFLDHKTLYYDVEPFLFYVMTEADNTGCHLIGYFSKEKNSFLNYNVSCILTMPQYMRQGYGKMLIDFSYLLSKVEEKVGSPERPLSDLGLISYRSYWKEVLLRYLHNFQGKEISIKEISQETAVNPVDIVSTLQALQMLKYWKGKHLVLKRQDLIDEWIAKEAKRSNSNKTMDPSCLKWTPPKGT</sequence>
<comment type="function">
    <text evidence="1 6 7 8 9 10">Catalytic subunit of histone acetyltransferase HBO1 complexes, which specifically mediate acetylation of histone H3 at 'Lys-14' (H3K14ac), thereby regulating various processes, such as gene transcription, protein ubiquitination, immune regulation, stem cell pluripotent and self-renewal maintenance and embryonic development (PubMed:21149574, PubMed:21753189, PubMed:23319590, PubMed:27733580, PubMed:31827282). Some complexes also catalyze acetylation of histone H4 at 'Lys-5', 'Lys-8' and 'Lys-12' (H4K5ac, H4K8ac and H4K12ac, respectively), regulating DNA replication initiation, regulating DNA replication initiation (By similarity). Specificity of the HBO1 complexes is determined by the scaffold subunit: complexes containing BRPF scaffold (BRPF1, BRD1/BRPF2 or BRPF3) direct KAT7/HBO1 specificity towards H3K14ac, while complexes containing JADE (JADE1, JADE2 and JADE3) scaffold direct KAT7/HBO1 specificity towards histone H4 (By similarity). H3K14ac promotes transcriptional elongation by facilitating the processivity of RNA polymerase II (PubMed:31827282). Acts as a key regulator of hematopoiesis by forming a complex with BRD1/BRPF2, directing KAT7/HBO1 specificity towards H3K14ac and promoting erythroid differentiation (By similarity). H3K14ac is also required for T-cell development (PubMed:27733580). KAT7/HBO1-mediated acetylation facilitates two consecutive steps, licensing and activation, in DNA replication initiation: H3K14ac facilitates the activation of replication origins, and histone H4 acetylation (H4K5ac, H4K8ac and H4K12ac) facilitates chromatin loading of MCM complexes, promoting DNA replication licensing (By similarity). Acts as a positive regulator of centromeric CENPA assembly: recruited to centromeres and mediates histone acetylation, thereby preventing centromere inactivation mediated by SUV39H1, possibly by increasing histone turnover/exchange (By similarity). Involved in nucleotide excision repair: phosphorylation by ATR in response to ultraviolet irradiation promotes its localization to DNA damage sites, where it mediates histone acetylation to facilitate recruitment of XPC at the damaged DNA sites (By similarity). Acts as an inhibitor of NF-kappa-B independently of its histone acetyltransferase activity (By similarity).</text>
</comment>
<comment type="function">
    <text evidence="10">Plays a central role in the maintenance of leukemia stem cells in acute myeloid leukemia (AML) (PubMed:31827282). Acts by mediating acetylation of histone H3 at 'Lys-14' (H3K14ac), thereby facilitating the processivity of RNA polymerase II to maintain the high expression of key genes, such as HOXA9 and HOXA10 that help to sustain the functional properties of leukemia stem cells (PubMed:31827282).</text>
</comment>
<comment type="catalytic activity">
    <reaction evidence="10 14">
        <text>L-lysyl-[protein] + acetyl-CoA = N(6)-acetyl-L-lysyl-[protein] + CoA + H(+)</text>
        <dbReference type="Rhea" id="RHEA:45948"/>
        <dbReference type="Rhea" id="RHEA-COMP:9752"/>
        <dbReference type="Rhea" id="RHEA-COMP:10731"/>
        <dbReference type="ChEBI" id="CHEBI:15378"/>
        <dbReference type="ChEBI" id="CHEBI:29969"/>
        <dbReference type="ChEBI" id="CHEBI:57287"/>
        <dbReference type="ChEBI" id="CHEBI:57288"/>
        <dbReference type="ChEBI" id="CHEBI:61930"/>
        <dbReference type="EC" id="2.3.1.48"/>
    </reaction>
    <physiologicalReaction direction="left-to-right" evidence="10 14">
        <dbReference type="Rhea" id="RHEA:45949"/>
    </physiologicalReaction>
</comment>
<comment type="activity regulation">
    <text evidence="1">Histone acetyltransferase activity is inhibited by GMNN in the context of a complex with CDT1, inhibiting histone H4 acetylation and DNA replication licensing.</text>
</comment>
<comment type="subunit">
    <text evidence="1 7 8 10">Component of the HBO1 complex composed of KAT7/HBO1, MEAF6, ING4 or ING5, and one scaffold subunit: complexes containing BRPF scaffold (BRPF1, BRD1/BRPF2 or BRPF3) direct KAT7/HBO1 specificity towards H3K14ac, while complexes containing JADE scaffold (JADE1, JADE2 and JADE3) mediate acetylation of histone H4 (PubMed:21753189, PubMed:31827282). Interacts with MCM2 and ORC1 (By similarity). Interacts with the androgen receptor (AR) in the presence of dihydrotestosterone (By similarity). Interacts with CDT1 (By similarity). Interacts with MAP2K1 and CUL1 (PubMed:23319590). Interacts with p53/TP53; leading to inhibit histone acetyltransferase activity (By similarity).</text>
</comment>
<comment type="subcellular location">
    <subcellularLocation>
        <location evidence="6 8">Nucleus</location>
    </subcellularLocation>
    <subcellularLocation>
        <location evidence="1">Chromosome</location>
    </subcellularLocation>
    <subcellularLocation>
        <location evidence="1">Chromosome</location>
        <location evidence="1">Centromere</location>
    </subcellularLocation>
    <subcellularLocation>
        <location evidence="8">Cytoplasm</location>
        <location evidence="8">Cytosol</location>
    </subcellularLocation>
    <text evidence="1">Associates with replication origins specifically during the G1 phase of the cell cycle. Localizes to transcription start sites. Localizes to ultraviolet-induced DNA damage sites following phosphorylation by ATR. Localizes to centromeres in G1 phase.</text>
</comment>
<comment type="alternative products">
    <event type="alternative splicing"/>
    <isoform>
        <id>Q5SVQ0-1</id>
        <name>1</name>
        <sequence type="displayed"/>
    </isoform>
    <isoform>
        <id>Q5SVQ0-2</id>
        <name>2</name>
        <sequence type="described" ref="VSP_014584"/>
    </isoform>
    <isoform>
        <id>Q5SVQ0-3</id>
        <name>3</name>
        <sequence type="described" ref="VSP_014582"/>
    </isoform>
    <isoform>
        <id>Q5SVQ0-4</id>
        <name>4</name>
        <sequence type="described" ref="VSP_014582 VSP_014584"/>
    </isoform>
    <isoform>
        <id>Q5SVQ0-5</id>
        <name>5</name>
        <sequence type="described" ref="VSP_014582 VSP_014583 VSP_014584"/>
    </isoform>
</comment>
<comment type="tissue specificity">
    <text evidence="6">Widely expressed in adult tissues.</text>
</comment>
<comment type="developmental stage">
    <text evidence="6">Expressed ubiquitously in the embryonic and extraembryonic tissues (PubMed:21149574). High levels are present in the chorionic plate (8.5 dpc and 9.5 dpc) as well as in and around the foregut and hindgut regions (9.5 dpc) (PubMed:21149574).</text>
</comment>
<comment type="domain">
    <text evidence="1">The C2HC MYST-type zinc finger is required for interaction with MCM2 and ORC1.</text>
</comment>
<comment type="domain">
    <text evidence="1">The N-terminus is involved in transcriptional repression, while the C-terminus mediates AR-interaction.</text>
</comment>
<comment type="PTM">
    <text evidence="1 8">Phosphorylated at Ser-52 and Ser-55 by ATR in response to DNA damage, promoting its ubiquitination by the CRL4(DDB2) complex and subsequent degradation. Phosphorylation at Ser-52 and Ser-55 by ATR in response to ultraviolet-induced DNA, promotes localization to DNA damage sites. Phosphorylation at Ser-59 by PLK1 during mitosis seems important for prereplicative complex formation and DNA replication licensing, and requires prior phosphorylation at Thr-87 and Thr-90 by CDK1 (By similarity). Phosphorylated by MAP2K1, which accelerates its degradation (PubMed:23319590).</text>
</comment>
<comment type="PTM">
    <text evidence="1">Ubiquitinated at Lys-340, leading to proteasomal degradation. Ubiquitinated by the CRL4(DDB2) complex following phosphorylation by ATR, leading to its subsequent degradation.</text>
</comment>
<comment type="PTM">
    <text evidence="2">Autoacetylation at Lys-434 is required for proper function.</text>
</comment>
<comment type="disruption phenotype">
    <text evidence="6 9">Embryonic lethality caused by a strong reduction of histone H3 'Lys-14' acetylation (H3K14ac) (PubMed:21149574). Development is arrested at the 10-somite stage (PubMed:21149574). Blood vessels, mesenchyme, and somites are disorganized (PubMed:21149574). No defects in DNA replication or cell proliferation are observed (PubMed:21149574). Conditional mice lacking Kat7 in thymocytes display normal alpha-beta T-cells but show impaired development of peripheral CD4(+) or CD8(+) T-cells (PubMed:27733580).</text>
</comment>
<comment type="similarity">
    <text evidence="13">Belongs to the MYST (SAS/MOZ) family.</text>
</comment>
<evidence type="ECO:0000250" key="1">
    <source>
        <dbReference type="UniProtKB" id="O95251"/>
    </source>
</evidence>
<evidence type="ECO:0000250" key="2">
    <source>
        <dbReference type="UniProtKB" id="Q9H7Z6"/>
    </source>
</evidence>
<evidence type="ECO:0000255" key="3">
    <source>
        <dbReference type="PROSITE-ProRule" id="PRU01063"/>
    </source>
</evidence>
<evidence type="ECO:0000255" key="4">
    <source>
        <dbReference type="PROSITE-ProRule" id="PRU01143"/>
    </source>
</evidence>
<evidence type="ECO:0000256" key="5">
    <source>
        <dbReference type="SAM" id="MobiDB-lite"/>
    </source>
</evidence>
<evidence type="ECO:0000269" key="6">
    <source>
    </source>
</evidence>
<evidence type="ECO:0000269" key="7">
    <source>
    </source>
</evidence>
<evidence type="ECO:0000269" key="8">
    <source>
    </source>
</evidence>
<evidence type="ECO:0000269" key="9">
    <source>
    </source>
</evidence>
<evidence type="ECO:0000269" key="10">
    <source>
    </source>
</evidence>
<evidence type="ECO:0000303" key="11">
    <source>
    </source>
</evidence>
<evidence type="ECO:0000303" key="12">
    <source>
    </source>
</evidence>
<evidence type="ECO:0000305" key="13"/>
<evidence type="ECO:0000305" key="14">
    <source>
    </source>
</evidence>
<evidence type="ECO:0000312" key="15">
    <source>
        <dbReference type="MGI" id="MGI:2182799"/>
    </source>
</evidence>
<evidence type="ECO:0007744" key="16">
    <source>
    </source>
</evidence>
<evidence type="ECO:0007744" key="17">
    <source>
    </source>
</evidence>
<organism>
    <name type="scientific">Mus musculus</name>
    <name type="common">Mouse</name>
    <dbReference type="NCBI Taxonomy" id="10090"/>
    <lineage>
        <taxon>Eukaryota</taxon>
        <taxon>Metazoa</taxon>
        <taxon>Chordata</taxon>
        <taxon>Craniata</taxon>
        <taxon>Vertebrata</taxon>
        <taxon>Euteleostomi</taxon>
        <taxon>Mammalia</taxon>
        <taxon>Eutheria</taxon>
        <taxon>Euarchontoglires</taxon>
        <taxon>Glires</taxon>
        <taxon>Rodentia</taxon>
        <taxon>Myomorpha</taxon>
        <taxon>Muroidea</taxon>
        <taxon>Muridae</taxon>
        <taxon>Murinae</taxon>
        <taxon>Mus</taxon>
        <taxon>Mus</taxon>
    </lineage>
</organism>
<protein>
    <recommendedName>
        <fullName evidence="13">Histone acetyltransferase KAT7</fullName>
        <ecNumber evidence="14">2.3.1.48</ecNumber>
    </recommendedName>
    <alternativeName>
        <fullName evidence="12">Histone acetyltransferase binding to ORC1</fullName>
    </alternativeName>
    <alternativeName>
        <fullName>Lysine acetyltransferase 7</fullName>
    </alternativeName>
    <alternativeName>
        <fullName>MOZ, YBF2/SAS3, SAS2 and TIP60 protein 2</fullName>
        <shortName>MYST-2</shortName>
    </alternativeName>
</protein>
<accession>Q5SVQ0</accession>
<accession>Q5SVQ1</accession>
<accession>Q5SVQ2</accession>
<accession>Q5SVQ3</accession>
<accession>Q5SVQ7</accession>
<accession>Q6PGC6</accession>
<accession>Q80Y65</accession>
<dbReference type="EC" id="2.3.1.48" evidence="14"/>
<dbReference type="EMBL" id="AL627222">
    <property type="protein sequence ID" value="CAI24800.1"/>
    <property type="molecule type" value="Genomic_DNA"/>
</dbReference>
<dbReference type="EMBL" id="AL627222">
    <property type="protein sequence ID" value="CAI24801.1"/>
    <property type="molecule type" value="Genomic_DNA"/>
</dbReference>
<dbReference type="EMBL" id="AL627222">
    <property type="protein sequence ID" value="CAI24802.1"/>
    <property type="molecule type" value="Genomic_DNA"/>
</dbReference>
<dbReference type="EMBL" id="AL627222">
    <property type="protein sequence ID" value="CAI24803.1"/>
    <property type="molecule type" value="Genomic_DNA"/>
</dbReference>
<dbReference type="EMBL" id="AL627222">
    <property type="protein sequence ID" value="CAI24804.1"/>
    <property type="molecule type" value="Genomic_DNA"/>
</dbReference>
<dbReference type="EMBL" id="AL627222">
    <property type="protein sequence ID" value="CAI24805.1"/>
    <property type="molecule type" value="Genomic_DNA"/>
</dbReference>
<dbReference type="EMBL" id="BC057102">
    <property type="protein sequence ID" value="AAH57102.1"/>
    <property type="molecule type" value="mRNA"/>
</dbReference>
<dbReference type="EMBL" id="BC048904">
    <property type="protein sequence ID" value="AAH48904.1"/>
    <property type="molecule type" value="mRNA"/>
</dbReference>
<dbReference type="CCDS" id="CCDS25275.1">
    <molecule id="Q5SVQ0-5"/>
</dbReference>
<dbReference type="CCDS" id="CCDS56798.1">
    <molecule id="Q5SVQ0-4"/>
</dbReference>
<dbReference type="CCDS" id="CCDS56799.1">
    <molecule id="Q5SVQ0-3"/>
</dbReference>
<dbReference type="RefSeq" id="NP_001181932.1">
    <molecule id="Q5SVQ0-3"/>
    <property type="nucleotide sequence ID" value="NM_001195003.2"/>
</dbReference>
<dbReference type="RefSeq" id="NP_001181933.1">
    <molecule id="Q5SVQ0-4"/>
    <property type="nucleotide sequence ID" value="NM_001195004.2"/>
</dbReference>
<dbReference type="RefSeq" id="NP_001392123.1">
    <molecule id="Q5SVQ0-1"/>
    <property type="nucleotide sequence ID" value="NM_001405194.1"/>
</dbReference>
<dbReference type="RefSeq" id="NP_001392126.1">
    <molecule id="Q5SVQ0-2"/>
    <property type="nucleotide sequence ID" value="NM_001405197.1"/>
</dbReference>
<dbReference type="RefSeq" id="NP_808287.1">
    <molecule id="Q5SVQ0-5"/>
    <property type="nucleotide sequence ID" value="NM_177619.4"/>
</dbReference>
<dbReference type="RefSeq" id="XP_006533076.1">
    <property type="nucleotide sequence ID" value="XM_006533013.3"/>
</dbReference>
<dbReference type="RefSeq" id="XP_006533077.1">
    <property type="nucleotide sequence ID" value="XM_006533014.3"/>
</dbReference>
<dbReference type="SMR" id="Q5SVQ0"/>
<dbReference type="BioGRID" id="229849">
    <property type="interactions" value="6"/>
</dbReference>
<dbReference type="ComplexPortal" id="CPX-794">
    <property type="entry name" value="HBO1-4.1 histone acetyltransferase complex"/>
</dbReference>
<dbReference type="ComplexPortal" id="CPX-795">
    <property type="entry name" value="HBO1-4.2 histone acetyltransferase complex"/>
</dbReference>
<dbReference type="ComplexPortal" id="CPX-796">
    <property type="entry name" value="HBO1-4.3 histone acetyltransferase complex"/>
</dbReference>
<dbReference type="ComplexPortal" id="CPX-797">
    <property type="entry name" value="HBO1-5.1 histone acetyltransferase complex"/>
</dbReference>
<dbReference type="ComplexPortal" id="CPX-798">
    <property type="entry name" value="HBO1-5.2 histone acetyltransferase complex"/>
</dbReference>
<dbReference type="ComplexPortal" id="CPX-799">
    <property type="entry name" value="HBO1-5.3 histone acetyltransferase complex"/>
</dbReference>
<dbReference type="FunCoup" id="Q5SVQ0">
    <property type="interactions" value="3995"/>
</dbReference>
<dbReference type="IntAct" id="Q5SVQ0">
    <property type="interactions" value="2"/>
</dbReference>
<dbReference type="MINT" id="Q5SVQ0"/>
<dbReference type="STRING" id="10090.ENSMUSP00000103362"/>
<dbReference type="iPTMnet" id="Q5SVQ0"/>
<dbReference type="PhosphoSitePlus" id="Q5SVQ0"/>
<dbReference type="jPOST" id="Q5SVQ0"/>
<dbReference type="PeptideAtlas" id="Q5SVQ0"/>
<dbReference type="ProteomicsDB" id="301737">
    <molecule id="Q5SVQ0-1"/>
</dbReference>
<dbReference type="ProteomicsDB" id="301738">
    <molecule id="Q5SVQ0-2"/>
</dbReference>
<dbReference type="ProteomicsDB" id="301739">
    <molecule id="Q5SVQ0-3"/>
</dbReference>
<dbReference type="ProteomicsDB" id="301740">
    <molecule id="Q5SVQ0-4"/>
</dbReference>
<dbReference type="ProteomicsDB" id="301741">
    <molecule id="Q5SVQ0-5"/>
</dbReference>
<dbReference type="Pumba" id="Q5SVQ0"/>
<dbReference type="Antibodypedia" id="17983">
    <property type="antibodies" value="384 antibodies from 39 providers"/>
</dbReference>
<dbReference type="DNASU" id="217127"/>
<dbReference type="Ensembl" id="ENSMUST00000072621.12">
    <molecule id="Q5SVQ0-2"/>
    <property type="protein sequence ID" value="ENSMUSP00000072416.6"/>
    <property type="gene ID" value="ENSMUSG00000038909.18"/>
</dbReference>
<dbReference type="Ensembl" id="ENSMUST00000092766.12">
    <molecule id="Q5SVQ0-1"/>
    <property type="protein sequence ID" value="ENSMUSP00000090441.6"/>
    <property type="gene ID" value="ENSMUSG00000038909.18"/>
</dbReference>
<dbReference type="Ensembl" id="ENSMUST00000103159.10">
    <molecule id="Q5SVQ0-5"/>
    <property type="protein sequence ID" value="ENSMUSP00000099448.4"/>
    <property type="gene ID" value="ENSMUSG00000038909.18"/>
</dbReference>
<dbReference type="Ensembl" id="ENSMUST00000107733.10">
    <molecule id="Q5SVQ0-4"/>
    <property type="protein sequence ID" value="ENSMUSP00000103361.4"/>
    <property type="gene ID" value="ENSMUSG00000038909.18"/>
</dbReference>
<dbReference type="Ensembl" id="ENSMUST00000107734.10">
    <molecule id="Q5SVQ0-3"/>
    <property type="protein sequence ID" value="ENSMUSP00000103362.4"/>
    <property type="gene ID" value="ENSMUSG00000038909.18"/>
</dbReference>
<dbReference type="GeneID" id="217127"/>
<dbReference type="KEGG" id="mmu:217127"/>
<dbReference type="UCSC" id="uc007lad.2">
    <molecule id="Q5SVQ0-5"/>
    <property type="organism name" value="mouse"/>
</dbReference>
<dbReference type="AGR" id="MGI:2182799"/>
<dbReference type="CTD" id="11143"/>
<dbReference type="MGI" id="MGI:2182799">
    <property type="gene designation" value="Kat7"/>
</dbReference>
<dbReference type="VEuPathDB" id="HostDB:ENSMUSG00000038909"/>
<dbReference type="GeneTree" id="ENSGT00940000157744"/>
<dbReference type="HOGENOM" id="CLU_011815_6_1_1"/>
<dbReference type="InParanoid" id="Q5SVQ0"/>
<dbReference type="OMA" id="EIGRYEM"/>
<dbReference type="OrthoDB" id="787137at2759"/>
<dbReference type="PhylomeDB" id="Q5SVQ0"/>
<dbReference type="TreeFam" id="TF317619"/>
<dbReference type="BRENDA" id="2.3.1.48">
    <property type="organism ID" value="3474"/>
</dbReference>
<dbReference type="Reactome" id="R-MMU-3214847">
    <property type="pathway name" value="HATs acetylate histones"/>
</dbReference>
<dbReference type="BioGRID-ORCS" id="217127">
    <property type="hits" value="11 hits in 83 CRISPR screens"/>
</dbReference>
<dbReference type="ChiTaRS" id="Kat7">
    <property type="organism name" value="mouse"/>
</dbReference>
<dbReference type="PRO" id="PR:Q5SVQ0"/>
<dbReference type="Proteomes" id="UP000000589">
    <property type="component" value="Chromosome 11"/>
</dbReference>
<dbReference type="RNAct" id="Q5SVQ0">
    <property type="molecule type" value="protein"/>
</dbReference>
<dbReference type="Bgee" id="ENSMUSG00000038909">
    <property type="expression patterns" value="Expressed in spermatocyte and 265 other cell types or tissues"/>
</dbReference>
<dbReference type="ExpressionAtlas" id="Q5SVQ0">
    <property type="expression patterns" value="baseline and differential"/>
</dbReference>
<dbReference type="GO" id="GO:0000775">
    <property type="term" value="C:chromosome, centromeric region"/>
    <property type="evidence" value="ECO:0007669"/>
    <property type="project" value="UniProtKB-SubCell"/>
</dbReference>
<dbReference type="GO" id="GO:0005829">
    <property type="term" value="C:cytosol"/>
    <property type="evidence" value="ECO:0007669"/>
    <property type="project" value="UniProtKB-SubCell"/>
</dbReference>
<dbReference type="GO" id="GO:0000123">
    <property type="term" value="C:histone acetyltransferase complex"/>
    <property type="evidence" value="ECO:0000250"/>
    <property type="project" value="UniProtKB"/>
</dbReference>
<dbReference type="GO" id="GO:0036409">
    <property type="term" value="C:histone H3-K14 acetyltransferase complex"/>
    <property type="evidence" value="ECO:0000314"/>
    <property type="project" value="UniProtKB"/>
</dbReference>
<dbReference type="GO" id="GO:0005654">
    <property type="term" value="C:nucleoplasm"/>
    <property type="evidence" value="ECO:0000250"/>
    <property type="project" value="UniProtKB"/>
</dbReference>
<dbReference type="GO" id="GO:0005634">
    <property type="term" value="C:nucleus"/>
    <property type="evidence" value="ECO:0000314"/>
    <property type="project" value="UniProtKB"/>
</dbReference>
<dbReference type="GO" id="GO:0090734">
    <property type="term" value="C:site of DNA damage"/>
    <property type="evidence" value="ECO:0000250"/>
    <property type="project" value="UniProtKB"/>
</dbReference>
<dbReference type="GO" id="GO:0003688">
    <property type="term" value="F:DNA replication origin binding"/>
    <property type="evidence" value="ECO:0007669"/>
    <property type="project" value="Ensembl"/>
</dbReference>
<dbReference type="GO" id="GO:0036408">
    <property type="term" value="F:histone H3K14 acetyltransferase activity"/>
    <property type="evidence" value="ECO:0000314"/>
    <property type="project" value="UniProtKB"/>
</dbReference>
<dbReference type="GO" id="GO:0043994">
    <property type="term" value="F:histone H3K23 acetyltransferase activity"/>
    <property type="evidence" value="ECO:0007669"/>
    <property type="project" value="Ensembl"/>
</dbReference>
<dbReference type="GO" id="GO:0044016">
    <property type="term" value="F:histone H3K4 acetyltransferase activity"/>
    <property type="evidence" value="ECO:0007669"/>
    <property type="project" value="Ensembl"/>
</dbReference>
<dbReference type="GO" id="GO:0043997">
    <property type="term" value="F:histone H4K12 acetyltransferase activity"/>
    <property type="evidence" value="ECO:0000250"/>
    <property type="project" value="UniProtKB"/>
</dbReference>
<dbReference type="GO" id="GO:0043995">
    <property type="term" value="F:histone H4K5 acetyltransferase activity"/>
    <property type="evidence" value="ECO:0000250"/>
    <property type="project" value="UniProtKB"/>
</dbReference>
<dbReference type="GO" id="GO:0043996">
    <property type="term" value="F:histone H4K8 acetyltransferase activity"/>
    <property type="evidence" value="ECO:0000250"/>
    <property type="project" value="UniProtKB"/>
</dbReference>
<dbReference type="GO" id="GO:0008270">
    <property type="term" value="F:zinc ion binding"/>
    <property type="evidence" value="ECO:0007669"/>
    <property type="project" value="UniProtKB-KW"/>
</dbReference>
<dbReference type="GO" id="GO:0006281">
    <property type="term" value="P:DNA repair"/>
    <property type="evidence" value="ECO:0007669"/>
    <property type="project" value="UniProtKB-KW"/>
</dbReference>
<dbReference type="GO" id="GO:0006260">
    <property type="term" value="P:DNA replication"/>
    <property type="evidence" value="ECO:0007669"/>
    <property type="project" value="UniProtKB-KW"/>
</dbReference>
<dbReference type="GO" id="GO:0140889">
    <property type="term" value="P:DNA replication-dependent chromatin disassembly"/>
    <property type="evidence" value="ECO:0000250"/>
    <property type="project" value="UniProtKB"/>
</dbReference>
<dbReference type="GO" id="GO:0018393">
    <property type="term" value="P:internal peptidyl-lysine acetylation"/>
    <property type="evidence" value="ECO:0000250"/>
    <property type="project" value="UniProtKB"/>
</dbReference>
<dbReference type="GO" id="GO:0001779">
    <property type="term" value="P:natural killer cell differentiation"/>
    <property type="evidence" value="ECO:0000315"/>
    <property type="project" value="UniProtKB"/>
</dbReference>
<dbReference type="GO" id="GO:0045740">
    <property type="term" value="P:positive regulation of DNA replication"/>
    <property type="evidence" value="ECO:0000250"/>
    <property type="project" value="UniProtKB"/>
</dbReference>
<dbReference type="GO" id="GO:0032786">
    <property type="term" value="P:positive regulation of DNA-templated transcription, elongation"/>
    <property type="evidence" value="ECO:0000314"/>
    <property type="project" value="UniProtKB"/>
</dbReference>
<dbReference type="GO" id="GO:0045648">
    <property type="term" value="P:positive regulation of erythrocyte differentiation"/>
    <property type="evidence" value="ECO:0000315"/>
    <property type="project" value="UniProtKB"/>
</dbReference>
<dbReference type="GO" id="GO:1902035">
    <property type="term" value="P:positive regulation of hematopoietic stem cell proliferation"/>
    <property type="evidence" value="ECO:0000314"/>
    <property type="project" value="UniProtKB"/>
</dbReference>
<dbReference type="GO" id="GO:1900182">
    <property type="term" value="P:positive regulation of protein localization to nucleus"/>
    <property type="evidence" value="ECO:0007669"/>
    <property type="project" value="Ensembl"/>
</dbReference>
<dbReference type="GO" id="GO:0045944">
    <property type="term" value="P:positive regulation of transcription by RNA polymerase II"/>
    <property type="evidence" value="ECO:0000315"/>
    <property type="project" value="UniProtKB"/>
</dbReference>
<dbReference type="GO" id="GO:0051726">
    <property type="term" value="P:regulation of cell cycle"/>
    <property type="evidence" value="ECO:0000266"/>
    <property type="project" value="ComplexPortal"/>
</dbReference>
<dbReference type="GO" id="GO:0001558">
    <property type="term" value="P:regulation of cell growth"/>
    <property type="evidence" value="ECO:0000266"/>
    <property type="project" value="ComplexPortal"/>
</dbReference>
<dbReference type="GO" id="GO:2000278">
    <property type="term" value="P:regulation of DNA biosynthetic process"/>
    <property type="evidence" value="ECO:0000266"/>
    <property type="project" value="ComplexPortal"/>
</dbReference>
<dbReference type="GO" id="GO:0006275">
    <property type="term" value="P:regulation of DNA replication"/>
    <property type="evidence" value="ECO:0000266"/>
    <property type="project" value="ComplexPortal"/>
</dbReference>
<dbReference type="GO" id="GO:0030174">
    <property type="term" value="P:regulation of DNA-templated DNA replication initiation"/>
    <property type="evidence" value="ECO:0000250"/>
    <property type="project" value="UniProtKB"/>
</dbReference>
<dbReference type="GO" id="GO:0006355">
    <property type="term" value="P:regulation of DNA-templated transcription"/>
    <property type="evidence" value="ECO:0000266"/>
    <property type="project" value="ComplexPortal"/>
</dbReference>
<dbReference type="GO" id="GO:2000819">
    <property type="term" value="P:regulation of nucleotide-excision repair"/>
    <property type="evidence" value="ECO:0000250"/>
    <property type="project" value="UniProtKB"/>
</dbReference>
<dbReference type="GO" id="GO:0072716">
    <property type="term" value="P:response to actinomycin D"/>
    <property type="evidence" value="ECO:0007669"/>
    <property type="project" value="Ensembl"/>
</dbReference>
<dbReference type="GO" id="GO:0072739">
    <property type="term" value="P:response to anisomycin"/>
    <property type="evidence" value="ECO:0007669"/>
    <property type="project" value="Ensembl"/>
</dbReference>
<dbReference type="GO" id="GO:0072720">
    <property type="term" value="P:response to dithiothreitol"/>
    <property type="evidence" value="ECO:0007669"/>
    <property type="project" value="Ensembl"/>
</dbReference>
<dbReference type="GO" id="GO:0072710">
    <property type="term" value="P:response to hydroxyurea"/>
    <property type="evidence" value="ECO:0007669"/>
    <property type="project" value="Ensembl"/>
</dbReference>
<dbReference type="GO" id="GO:0072708">
    <property type="term" value="P:response to sorbitol"/>
    <property type="evidence" value="ECO:0007669"/>
    <property type="project" value="Ensembl"/>
</dbReference>
<dbReference type="GO" id="GO:0031098">
    <property type="term" value="P:stress-activated protein kinase signaling cascade"/>
    <property type="evidence" value="ECO:0007669"/>
    <property type="project" value="Ensembl"/>
</dbReference>
<dbReference type="GO" id="GO:0030217">
    <property type="term" value="P:T cell differentiation"/>
    <property type="evidence" value="ECO:0000315"/>
    <property type="project" value="GO_Central"/>
</dbReference>
<dbReference type="GO" id="GO:0045815">
    <property type="term" value="P:transcription initiation-coupled chromatin remodeling"/>
    <property type="evidence" value="ECO:0000315"/>
    <property type="project" value="UniProtKB"/>
</dbReference>
<dbReference type="FunFam" id="1.10.10.10:FF:000092">
    <property type="entry name" value="Histone acetyltransferase"/>
    <property type="match status" value="1"/>
</dbReference>
<dbReference type="FunFam" id="3.30.60.60:FF:000001">
    <property type="entry name" value="Histone acetyltransferase"/>
    <property type="match status" value="1"/>
</dbReference>
<dbReference type="FunFam" id="3.40.630.30:FF:000001">
    <property type="entry name" value="Histone acetyltransferase"/>
    <property type="match status" value="1"/>
</dbReference>
<dbReference type="FunFam" id="4.10.320.30:FF:000002">
    <property type="entry name" value="Histone acetyltransferase"/>
    <property type="match status" value="1"/>
</dbReference>
<dbReference type="Gene3D" id="3.40.630.30">
    <property type="match status" value="1"/>
</dbReference>
<dbReference type="Gene3D" id="4.10.320.30">
    <property type="match status" value="1"/>
</dbReference>
<dbReference type="Gene3D" id="3.30.60.60">
    <property type="entry name" value="N-acetyl transferase-like"/>
    <property type="match status" value="1"/>
</dbReference>
<dbReference type="Gene3D" id="1.10.10.10">
    <property type="entry name" value="Winged helix-like DNA-binding domain superfamily/Winged helix DNA-binding domain"/>
    <property type="match status" value="1"/>
</dbReference>
<dbReference type="InterPro" id="IPR016181">
    <property type="entry name" value="Acyl_CoA_acyltransferase"/>
</dbReference>
<dbReference type="InterPro" id="IPR002717">
    <property type="entry name" value="HAT_MYST-type"/>
</dbReference>
<dbReference type="InterPro" id="IPR050603">
    <property type="entry name" value="MYST_HAT"/>
</dbReference>
<dbReference type="InterPro" id="IPR036388">
    <property type="entry name" value="WH-like_DNA-bd_sf"/>
</dbReference>
<dbReference type="InterPro" id="IPR040706">
    <property type="entry name" value="Zf-MYST"/>
</dbReference>
<dbReference type="InterPro" id="IPR002515">
    <property type="entry name" value="Znf_C2H2C"/>
</dbReference>
<dbReference type="InterPro" id="IPR036060">
    <property type="entry name" value="Znf_C2H2C_sf"/>
</dbReference>
<dbReference type="PANTHER" id="PTHR10615">
    <property type="entry name" value="HISTONE ACETYLTRANSFERASE"/>
    <property type="match status" value="1"/>
</dbReference>
<dbReference type="PANTHER" id="PTHR10615:SF161">
    <property type="entry name" value="HISTONE ACETYLTRANSFERASE KAT7"/>
    <property type="match status" value="1"/>
</dbReference>
<dbReference type="Pfam" id="PF01853">
    <property type="entry name" value="MOZ_SAS"/>
    <property type="match status" value="1"/>
</dbReference>
<dbReference type="Pfam" id="PF01530">
    <property type="entry name" value="zf-C2HC"/>
    <property type="match status" value="1"/>
</dbReference>
<dbReference type="Pfam" id="PF17772">
    <property type="entry name" value="zf-MYST"/>
    <property type="match status" value="1"/>
</dbReference>
<dbReference type="SUPFAM" id="SSF55729">
    <property type="entry name" value="Acyl-CoA N-acyltransferases (Nat)"/>
    <property type="match status" value="1"/>
</dbReference>
<dbReference type="SUPFAM" id="SSF103637">
    <property type="entry name" value="CCHHC domain"/>
    <property type="match status" value="1"/>
</dbReference>
<dbReference type="PROSITE" id="PS51726">
    <property type="entry name" value="MYST_HAT"/>
    <property type="match status" value="1"/>
</dbReference>
<dbReference type="PROSITE" id="PS51802">
    <property type="entry name" value="ZF_CCHHC"/>
    <property type="match status" value="1"/>
</dbReference>